<sequence>MKFIIILFTLISIVTAAQRIYNKDYSYYGCNSYCDKASDQEDACGYYDDDVSYQDYYGCLCGNEIFLSNLKSCDCFTSIIASVSKSVCSKATEDSDWGYYDDSTSSIMDFFTADNTPASNTGMTTQTDGAINDNQNTGSKTSSGAANYLTSFSIGTFFVFVLGLI</sequence>
<dbReference type="EMBL" id="CP017626">
    <property type="protein sequence ID" value="AOW29379.1"/>
    <property type="molecule type" value="Genomic_DNA"/>
</dbReference>
<dbReference type="RefSeq" id="XP_715534.1">
    <property type="nucleotide sequence ID" value="XM_710441.1"/>
</dbReference>
<dbReference type="STRING" id="237561.Q5A1E1"/>
<dbReference type="EnsemblFungi" id="C4_06560W_A-T">
    <property type="protein sequence ID" value="C4_06560W_A-T-p1"/>
    <property type="gene ID" value="C4_06560W_A"/>
</dbReference>
<dbReference type="GeneID" id="3642781"/>
<dbReference type="KEGG" id="cal:CAALFM_C406560WA"/>
<dbReference type="CGD" id="CAL0000184232">
    <property type="gene designation" value="PGA15"/>
</dbReference>
<dbReference type="VEuPathDB" id="FungiDB:C4_06560W_A"/>
<dbReference type="HOGENOM" id="CLU_141124_0_0_1"/>
<dbReference type="InParanoid" id="Q5A1E1"/>
<dbReference type="OMA" id="DQEDACG"/>
<dbReference type="OrthoDB" id="4025955at2759"/>
<dbReference type="PRO" id="PR:Q5A1E1"/>
<dbReference type="Proteomes" id="UP000000559">
    <property type="component" value="Chromosome 4"/>
</dbReference>
<dbReference type="GO" id="GO:0005576">
    <property type="term" value="C:extracellular region"/>
    <property type="evidence" value="ECO:0007669"/>
    <property type="project" value="UniProtKB-KW"/>
</dbReference>
<dbReference type="GO" id="GO:0098552">
    <property type="term" value="C:side of membrane"/>
    <property type="evidence" value="ECO:0007669"/>
    <property type="project" value="UniProtKB-KW"/>
</dbReference>
<proteinExistence type="evidence at protein level"/>
<reference key="1">
    <citation type="journal article" date="2004" name="Proc. Natl. Acad. Sci. U.S.A.">
        <title>The diploid genome sequence of Candida albicans.</title>
        <authorList>
            <person name="Jones T."/>
            <person name="Federspiel N.A."/>
            <person name="Chibana H."/>
            <person name="Dungan J."/>
            <person name="Kalman S."/>
            <person name="Magee B.B."/>
            <person name="Newport G."/>
            <person name="Thorstenson Y.R."/>
            <person name="Agabian N."/>
            <person name="Magee P.T."/>
            <person name="Davis R.W."/>
            <person name="Scherer S."/>
        </authorList>
    </citation>
    <scope>NUCLEOTIDE SEQUENCE [LARGE SCALE GENOMIC DNA]</scope>
    <source>
        <strain>SC5314 / ATCC MYA-2876</strain>
    </source>
</reference>
<reference key="2">
    <citation type="journal article" date="2007" name="Genome Biol.">
        <title>Assembly of the Candida albicans genome into sixteen supercontigs aligned on the eight chromosomes.</title>
        <authorList>
            <person name="van het Hoog M."/>
            <person name="Rast T.J."/>
            <person name="Martchenko M."/>
            <person name="Grindle S."/>
            <person name="Dignard D."/>
            <person name="Hogues H."/>
            <person name="Cuomo C."/>
            <person name="Berriman M."/>
            <person name="Scherer S."/>
            <person name="Magee B.B."/>
            <person name="Whiteway M."/>
            <person name="Chibana H."/>
            <person name="Nantel A."/>
            <person name="Magee P.T."/>
        </authorList>
    </citation>
    <scope>GENOME REANNOTATION</scope>
    <source>
        <strain>SC5314 / ATCC MYA-2876</strain>
    </source>
</reference>
<reference key="3">
    <citation type="journal article" date="2013" name="Genome Biol.">
        <title>Assembly of a phased diploid Candida albicans genome facilitates allele-specific measurements and provides a simple model for repeat and indel structure.</title>
        <authorList>
            <person name="Muzzey D."/>
            <person name="Schwartz K."/>
            <person name="Weissman J.S."/>
            <person name="Sherlock G."/>
        </authorList>
    </citation>
    <scope>NUCLEOTIDE SEQUENCE [LARGE SCALE GENOMIC DNA]</scope>
    <scope>GENOME REANNOTATION</scope>
    <source>
        <strain>SC5314 / ATCC MYA-2876</strain>
    </source>
</reference>
<reference key="4">
    <citation type="journal article" date="2003" name="Yeast">
        <title>Genome-wide identification of fungal GPI proteins.</title>
        <authorList>
            <person name="De Groot P.W."/>
            <person name="Hellingwerf K.J."/>
            <person name="Klis F.M."/>
        </authorList>
    </citation>
    <scope>PREDICTION OF GPI-ANCHOR</scope>
</reference>
<reference key="5">
    <citation type="journal article" date="2007" name="Yeast">
        <title>Global transcriptional profiling of Candida albicans cwt1 null mutant.</title>
        <authorList>
            <person name="Moreno I."/>
            <person name="Castillo L."/>
            <person name="Sentandreu R."/>
            <person name="Valentin E."/>
        </authorList>
    </citation>
    <scope>INDUCTION</scope>
</reference>
<reference key="6">
    <citation type="journal article" date="2013" name="Antimicrob. Agents Chemother.">
        <title>Milbemycins: more than efflux inhibitors for fungal pathogens.</title>
        <authorList>
            <person name="Silva L.V."/>
            <person name="Sanguinetti M."/>
            <person name="Vandeputte P."/>
            <person name="Torelli R."/>
            <person name="Rochat B."/>
            <person name="Sanglard D."/>
        </authorList>
    </citation>
    <scope>INDUCTION</scope>
</reference>
<organism>
    <name type="scientific">Candida albicans (strain SC5314 / ATCC MYA-2876)</name>
    <name type="common">Yeast</name>
    <dbReference type="NCBI Taxonomy" id="237561"/>
    <lineage>
        <taxon>Eukaryota</taxon>
        <taxon>Fungi</taxon>
        <taxon>Dikarya</taxon>
        <taxon>Ascomycota</taxon>
        <taxon>Saccharomycotina</taxon>
        <taxon>Pichiomycetes</taxon>
        <taxon>Debaryomycetaceae</taxon>
        <taxon>Candida/Lodderomyces clade</taxon>
        <taxon>Candida</taxon>
    </lineage>
</organism>
<comment type="function">
    <text evidence="1">Probable GPI-anchored cell wall protein that may be involved in cell wall organization, hyphal growth, as well as in virulence.</text>
</comment>
<comment type="subcellular location">
    <subcellularLocation>
        <location evidence="1">Secreted</location>
        <location evidence="1">Cell wall</location>
    </subcellularLocation>
    <subcellularLocation>
        <location evidence="5">Membrane</location>
        <topology evidence="5">Lipid-anchor</topology>
        <topology evidence="5">GPI-anchor</topology>
    </subcellularLocation>
</comment>
<comment type="induction">
    <text evidence="3 4">Up-regulated upon milbemycin A3 oxim derivative (A3Ox) treatment. Expression is also regulated by CWT1.</text>
</comment>
<comment type="PTM">
    <text evidence="1">The GPI-anchor is attached to the protein in the endoplasmic reticulum and serves to target the protein to the cell surface. There, the glucosamine-inositol phospholipid moiety is cleaved off and the GPI-modified mannoprotein is covalently attached via its lipidless GPI glycan remnant to the 1,6-beta-glucan of the outer cell wall layer (By similarity).</text>
</comment>
<comment type="similarity">
    <text evidence="5">Belongs to the IHD1 family.</text>
</comment>
<keyword id="KW-0134">Cell wall</keyword>
<keyword id="KW-0325">Glycoprotein</keyword>
<keyword id="KW-0336">GPI-anchor</keyword>
<keyword id="KW-0449">Lipoprotein</keyword>
<keyword id="KW-0472">Membrane</keyword>
<keyword id="KW-1185">Reference proteome</keyword>
<keyword id="KW-0964">Secreted</keyword>
<keyword id="KW-0732">Signal</keyword>
<keyword id="KW-0843">Virulence</keyword>
<name>PGA15_CANAL</name>
<feature type="signal peptide" evidence="2">
    <location>
        <begin position="1"/>
        <end position="16"/>
    </location>
</feature>
<feature type="chain" id="PRO_0000424737" description="Probable cell wall protein PGA15">
    <location>
        <begin position="17"/>
        <end position="143"/>
    </location>
</feature>
<feature type="propeptide" id="PRO_0000424738" description="Removed in mature form" evidence="2">
    <location>
        <begin position="144"/>
        <end position="165"/>
    </location>
</feature>
<feature type="lipid moiety-binding region" description="GPI-anchor amidated serine" evidence="2">
    <location>
        <position position="143"/>
    </location>
</feature>
<accession>Q5A1E1</accession>
<accession>A0A1D8PMM5</accession>
<gene>
    <name type="primary">PGA15</name>
    <name type="ordered locus">CAALFM_C406560WA</name>
    <name type="ORF">CaO19.10396</name>
    <name type="ORF">CaO19.2878</name>
</gene>
<evidence type="ECO:0000250" key="1"/>
<evidence type="ECO:0000255" key="2"/>
<evidence type="ECO:0000269" key="3">
    <source>
    </source>
</evidence>
<evidence type="ECO:0000269" key="4">
    <source>
    </source>
</evidence>
<evidence type="ECO:0000305" key="5"/>
<protein>
    <recommendedName>
        <fullName>Probable cell wall protein PGA15</fullName>
    </recommendedName>
    <alternativeName>
        <fullName>Predicted GPI-anchored protein 15</fullName>
    </alternativeName>
</protein>